<dbReference type="EC" id="6.3.4.20" evidence="1"/>
<dbReference type="EMBL" id="CP000817">
    <property type="protein sequence ID" value="ACA40602.1"/>
    <property type="molecule type" value="Genomic_DNA"/>
</dbReference>
<dbReference type="RefSeq" id="WP_012294686.1">
    <property type="nucleotide sequence ID" value="NC_010382.1"/>
</dbReference>
<dbReference type="SMR" id="B1HPF6"/>
<dbReference type="EnsemblBacteria" id="ACA40602">
    <property type="protein sequence ID" value="ACA40602"/>
    <property type="gene ID" value="Bsph_3089"/>
</dbReference>
<dbReference type="KEGG" id="lsp:Bsph_3089"/>
<dbReference type="HOGENOM" id="CLU_081854_0_0_9"/>
<dbReference type="UniPathway" id="UPA00391"/>
<dbReference type="Proteomes" id="UP000002164">
    <property type="component" value="Chromosome"/>
</dbReference>
<dbReference type="GO" id="GO:0005524">
    <property type="term" value="F:ATP binding"/>
    <property type="evidence" value="ECO:0007669"/>
    <property type="project" value="UniProtKB-UniRule"/>
</dbReference>
<dbReference type="GO" id="GO:0016879">
    <property type="term" value="F:ligase activity, forming carbon-nitrogen bonds"/>
    <property type="evidence" value="ECO:0007669"/>
    <property type="project" value="UniProtKB-UniRule"/>
</dbReference>
<dbReference type="GO" id="GO:0008270">
    <property type="term" value="F:zinc ion binding"/>
    <property type="evidence" value="ECO:0007669"/>
    <property type="project" value="UniProtKB-UniRule"/>
</dbReference>
<dbReference type="GO" id="GO:0008616">
    <property type="term" value="P:queuosine biosynthetic process"/>
    <property type="evidence" value="ECO:0007669"/>
    <property type="project" value="UniProtKB-UniRule"/>
</dbReference>
<dbReference type="CDD" id="cd01995">
    <property type="entry name" value="QueC-like"/>
    <property type="match status" value="1"/>
</dbReference>
<dbReference type="FunFam" id="3.40.50.620:FF:000017">
    <property type="entry name" value="7-cyano-7-deazaguanine synthase"/>
    <property type="match status" value="1"/>
</dbReference>
<dbReference type="Gene3D" id="3.40.50.620">
    <property type="entry name" value="HUPs"/>
    <property type="match status" value="1"/>
</dbReference>
<dbReference type="HAMAP" id="MF_01633">
    <property type="entry name" value="QueC"/>
    <property type="match status" value="1"/>
</dbReference>
<dbReference type="InterPro" id="IPR018317">
    <property type="entry name" value="QueC"/>
</dbReference>
<dbReference type="InterPro" id="IPR014729">
    <property type="entry name" value="Rossmann-like_a/b/a_fold"/>
</dbReference>
<dbReference type="NCBIfam" id="TIGR00364">
    <property type="entry name" value="7-cyano-7-deazaguanine synthase QueC"/>
    <property type="match status" value="1"/>
</dbReference>
<dbReference type="PANTHER" id="PTHR42914">
    <property type="entry name" value="7-CYANO-7-DEAZAGUANINE SYNTHASE"/>
    <property type="match status" value="1"/>
</dbReference>
<dbReference type="PANTHER" id="PTHR42914:SF1">
    <property type="entry name" value="7-CYANO-7-DEAZAGUANINE SYNTHASE"/>
    <property type="match status" value="1"/>
</dbReference>
<dbReference type="Pfam" id="PF06508">
    <property type="entry name" value="QueC"/>
    <property type="match status" value="1"/>
</dbReference>
<dbReference type="PIRSF" id="PIRSF006293">
    <property type="entry name" value="ExsB"/>
    <property type="match status" value="1"/>
</dbReference>
<dbReference type="SUPFAM" id="SSF52402">
    <property type="entry name" value="Adenine nucleotide alpha hydrolases-like"/>
    <property type="match status" value="1"/>
</dbReference>
<name>QUEC_LYSSC</name>
<organism>
    <name type="scientific">Lysinibacillus sphaericus (strain C3-41)</name>
    <dbReference type="NCBI Taxonomy" id="444177"/>
    <lineage>
        <taxon>Bacteria</taxon>
        <taxon>Bacillati</taxon>
        <taxon>Bacillota</taxon>
        <taxon>Bacilli</taxon>
        <taxon>Bacillales</taxon>
        <taxon>Bacillaceae</taxon>
        <taxon>Lysinibacillus</taxon>
    </lineage>
</organism>
<accession>B1HPF6</accession>
<protein>
    <recommendedName>
        <fullName evidence="1">7-cyano-7-deazaguanine synthase</fullName>
        <ecNumber evidence="1">6.3.4.20</ecNumber>
    </recommendedName>
    <alternativeName>
        <fullName evidence="1">7-cyano-7-carbaguanine synthase</fullName>
    </alternativeName>
    <alternativeName>
        <fullName evidence="1">PreQ(0) synthase</fullName>
    </alternativeName>
    <alternativeName>
        <fullName evidence="1">Queuosine biosynthesis protein QueC</fullName>
    </alternativeName>
</protein>
<reference key="1">
    <citation type="journal article" date="2008" name="J. Bacteriol.">
        <title>Complete genome sequence of the mosquitocidal bacterium Bacillus sphaericus C3-41 and comparison with those of closely related Bacillus species.</title>
        <authorList>
            <person name="Hu X."/>
            <person name="Fan W."/>
            <person name="Han B."/>
            <person name="Liu H."/>
            <person name="Zheng D."/>
            <person name="Li Q."/>
            <person name="Dong W."/>
            <person name="Yan J."/>
            <person name="Gao M."/>
            <person name="Berry C."/>
            <person name="Yuan Z."/>
        </authorList>
    </citation>
    <scope>NUCLEOTIDE SEQUENCE [LARGE SCALE GENOMIC DNA]</scope>
    <source>
        <strain>C3-41</strain>
    </source>
</reference>
<feature type="chain" id="PRO_1000186611" description="7-cyano-7-deazaguanine synthase">
    <location>
        <begin position="1"/>
        <end position="219"/>
    </location>
</feature>
<feature type="binding site" evidence="1">
    <location>
        <begin position="10"/>
        <end position="20"/>
    </location>
    <ligand>
        <name>ATP</name>
        <dbReference type="ChEBI" id="CHEBI:30616"/>
    </ligand>
</feature>
<feature type="binding site" evidence="1">
    <location>
        <position position="187"/>
    </location>
    <ligand>
        <name>Zn(2+)</name>
        <dbReference type="ChEBI" id="CHEBI:29105"/>
    </ligand>
</feature>
<feature type="binding site" evidence="1">
    <location>
        <position position="196"/>
    </location>
    <ligand>
        <name>Zn(2+)</name>
        <dbReference type="ChEBI" id="CHEBI:29105"/>
    </ligand>
</feature>
<feature type="binding site" evidence="1">
    <location>
        <position position="199"/>
    </location>
    <ligand>
        <name>Zn(2+)</name>
        <dbReference type="ChEBI" id="CHEBI:29105"/>
    </ligand>
</feature>
<feature type="binding site" evidence="1">
    <location>
        <position position="202"/>
    </location>
    <ligand>
        <name>Zn(2+)</name>
        <dbReference type="ChEBI" id="CHEBI:29105"/>
    </ligand>
</feature>
<proteinExistence type="inferred from homology"/>
<gene>
    <name evidence="1" type="primary">queC</name>
    <name type="ordered locus">Bsph_3089</name>
</gene>
<sequence>MKQEKAIVVFSGGQDSTTCLFWAKERFAEIEAVTFNYGQRHRLEIECAEQIAEELGIKHHILDMTLLNQLAPNALTRQDIKVEDGQNGELPSTFVPGRNLLFLSFAGVLASQIGAKHIVTGVCETDFSGYPDCRDVFIKSLNVTLNLSMDNSFVIDTPLMWLNKAQTWELADQFGALEFVRERTLTCYNGVIADGCGECPACKLRKKGLDEYLSYRKEF</sequence>
<evidence type="ECO:0000255" key="1">
    <source>
        <dbReference type="HAMAP-Rule" id="MF_01633"/>
    </source>
</evidence>
<comment type="function">
    <text evidence="1">Catalyzes the ATP-dependent conversion of 7-carboxy-7-deazaguanine (CDG) to 7-cyano-7-deazaguanine (preQ(0)).</text>
</comment>
<comment type="catalytic activity">
    <reaction evidence="1">
        <text>7-carboxy-7-deazaguanine + NH4(+) + ATP = 7-cyano-7-deazaguanine + ADP + phosphate + H2O + H(+)</text>
        <dbReference type="Rhea" id="RHEA:27982"/>
        <dbReference type="ChEBI" id="CHEBI:15377"/>
        <dbReference type="ChEBI" id="CHEBI:15378"/>
        <dbReference type="ChEBI" id="CHEBI:28938"/>
        <dbReference type="ChEBI" id="CHEBI:30616"/>
        <dbReference type="ChEBI" id="CHEBI:43474"/>
        <dbReference type="ChEBI" id="CHEBI:45075"/>
        <dbReference type="ChEBI" id="CHEBI:61036"/>
        <dbReference type="ChEBI" id="CHEBI:456216"/>
        <dbReference type="EC" id="6.3.4.20"/>
    </reaction>
</comment>
<comment type="cofactor">
    <cofactor evidence="1">
        <name>Zn(2+)</name>
        <dbReference type="ChEBI" id="CHEBI:29105"/>
    </cofactor>
    <text evidence="1">Binds 1 zinc ion per subunit.</text>
</comment>
<comment type="pathway">
    <text evidence="1">Purine metabolism; 7-cyano-7-deazaguanine biosynthesis.</text>
</comment>
<comment type="subunit">
    <text evidence="1">Homodimer.</text>
</comment>
<comment type="similarity">
    <text evidence="1">Belongs to the QueC family.</text>
</comment>
<keyword id="KW-0067">ATP-binding</keyword>
<keyword id="KW-0436">Ligase</keyword>
<keyword id="KW-0479">Metal-binding</keyword>
<keyword id="KW-0547">Nucleotide-binding</keyword>
<keyword id="KW-0671">Queuosine biosynthesis</keyword>
<keyword id="KW-0862">Zinc</keyword>